<evidence type="ECO:0000250" key="1">
    <source>
        <dbReference type="UniProtKB" id="O64314"/>
    </source>
</evidence>
<evidence type="ECO:0000250" key="2">
    <source>
        <dbReference type="UniProtKB" id="P27380"/>
    </source>
</evidence>
<evidence type="ECO:0000255" key="3"/>
<evidence type="ECO:0000255" key="4">
    <source>
        <dbReference type="PROSITE-ProRule" id="PRU10071"/>
    </source>
</evidence>
<evidence type="ECO:0000256" key="5">
    <source>
        <dbReference type="SAM" id="MobiDB-lite"/>
    </source>
</evidence>
<evidence type="ECO:0000269" key="6">
    <source>
    </source>
</evidence>
<evidence type="ECO:0000305" key="7"/>
<evidence type="ECO:0000312" key="8">
    <source>
        <dbReference type="EMBL" id="AAC13005.1"/>
    </source>
</evidence>
<evidence type="ECO:0000312" key="9">
    <source>
        <dbReference type="Proteomes" id="UP000009091"/>
    </source>
</evidence>
<feature type="chain" id="PRO_0000431948" description="Probable tape measure protein" evidence="1">
    <location>
        <begin position="1"/>
        <end position="2285"/>
    </location>
</feature>
<feature type="region of interest" description="Disordered" evidence="5">
    <location>
        <begin position="138"/>
        <end position="180"/>
    </location>
</feature>
<feature type="coiled-coil region" evidence="3">
    <location>
        <begin position="12"/>
        <end position="133"/>
    </location>
</feature>
<feature type="coiled-coil region" evidence="3">
    <location>
        <begin position="174"/>
        <end position="260"/>
    </location>
</feature>
<feature type="coiled-coil region" evidence="3">
    <location>
        <begin position="298"/>
        <end position="324"/>
    </location>
</feature>
<feature type="coiled-coil region" evidence="3">
    <location>
        <begin position="620"/>
        <end position="643"/>
    </location>
</feature>
<feature type="coiled-coil region" evidence="3">
    <location>
        <begin position="768"/>
        <end position="788"/>
    </location>
</feature>
<feature type="coiled-coil region" evidence="3">
    <location>
        <begin position="843"/>
        <end position="903"/>
    </location>
</feature>
<feature type="coiled-coil region" evidence="3">
    <location>
        <begin position="985"/>
        <end position="1030"/>
    </location>
</feature>
<feature type="coiled-coil region" evidence="3">
    <location>
        <begin position="1067"/>
        <end position="1089"/>
    </location>
</feature>
<feature type="coiled-coil region" evidence="3">
    <location>
        <begin position="1219"/>
        <end position="1262"/>
    </location>
</feature>
<feature type="coiled-coil region" evidence="3">
    <location>
        <begin position="1328"/>
        <end position="1394"/>
    </location>
</feature>
<feature type="coiled-coil region" evidence="3">
    <location>
        <begin position="1702"/>
        <end position="1729"/>
    </location>
</feature>
<feature type="coiled-coil region" evidence="3">
    <location>
        <begin position="1790"/>
        <end position="1837"/>
    </location>
</feature>
<feature type="coiled-coil region" evidence="3">
    <location>
        <begin position="1875"/>
        <end position="1930"/>
    </location>
</feature>
<feature type="coiled-coil region" evidence="3">
    <location>
        <begin position="1963"/>
        <end position="2074"/>
    </location>
</feature>
<feature type="compositionally biased region" description="Polar residues" evidence="5">
    <location>
        <begin position="138"/>
        <end position="151"/>
    </location>
</feature>
<feature type="compositionally biased region" description="Low complexity" evidence="5">
    <location>
        <begin position="164"/>
        <end position="179"/>
    </location>
</feature>
<feature type="active site" evidence="4">
    <location>
        <position position="1447"/>
    </location>
</feature>
<keyword id="KW-0929">Antimicrobial</keyword>
<keyword id="KW-0081">Bacteriolytic enzyme</keyword>
<keyword id="KW-0175">Coiled coil</keyword>
<keyword id="KW-1235">Degradation of host cell envelope components during virus entry</keyword>
<keyword id="KW-1236">Degradation of host peptidoglycans during virus entry</keyword>
<keyword id="KW-0456">Lyase</keyword>
<keyword id="KW-1185">Reference proteome</keyword>
<keyword id="KW-1171">Viral genome ejection through host cell envelope</keyword>
<keyword id="KW-1243">Viral long flexible tail ejection system</keyword>
<keyword id="KW-1162">Viral penetration into host cytoplasm</keyword>
<keyword id="KW-1188">Viral release from host cell</keyword>
<keyword id="KW-1245">Viral tail assembly</keyword>
<keyword id="KW-0946">Virion</keyword>
<keyword id="KW-1160">Virus entry into host cell</keyword>
<organism evidence="9">
    <name type="scientific">Bacillus phage SPbeta</name>
    <name type="common">Bacillus phage SPBc2</name>
    <name type="synonym">Bacteriophage SP-beta</name>
    <dbReference type="NCBI Taxonomy" id="2932878"/>
    <lineage>
        <taxon>Viruses</taxon>
        <taxon>Duplodnaviria</taxon>
        <taxon>Heunggongvirae</taxon>
        <taxon>Uroviricota</taxon>
        <taxon>Caudoviricetes</taxon>
        <taxon>Spbetavirus</taxon>
        <taxon>Spbetavirus SPbeta</taxon>
    </lineage>
</organism>
<organismHost>
    <name type="scientific">Bacillus pumilus</name>
    <name type="common">Bacillus mesentericus</name>
    <dbReference type="NCBI Taxonomy" id="1408"/>
</organismHost>
<organismHost>
    <name type="scientific">Bacillus subtilis</name>
    <dbReference type="NCBI Taxonomy" id="1423"/>
</organismHost>
<protein>
    <recommendedName>
        <fullName evidence="1">Probable tape measure protein</fullName>
        <shortName>TMP</shortName>
    </recommendedName>
    <alternativeName>
        <fullName evidence="2">Transglycosylase</fullName>
        <ecNumber evidence="2">4.2.2.n1</ecNumber>
    </alternativeName>
</protein>
<proteinExistence type="inferred from homology"/>
<sequence>MSQNLKIILTPQADTSSKTVEQLNQQIKSLEKKLNSLKLNTNIDSTTLKALQEFSSAIDTYQKNLKSYNQTVKETSTVIKNADGSVEKLTQQYKKNGEILQRETKIINNRNTALKQETQEVNKLTQATEKLGQVQKKTVQRNLQGQPTKVVQKNRHGFDDIVYTTDPKTNSTSSKTTTNYDQQRRAIEQLKQDLEKLRQQGIVTDTTISSLGRKINTAQSAQQIEALQNRIRMLDDKSAAVAKNNELKKTIELYQRQAQVNVQNLNTRYGSSMGSSNRQAVQDYLNAVNSLNVSTGSNNIRSQIQSLNMQFRELASNAQTAANQASSFGAELTQTFKSMSTYLISGSLFYGAISGLKEMVSQAIEIDTLMTNIRRVMNEPDYKYNELLQESIDLGDTLSNKITDILQMTGDFGRMGFDESELSTLTKTAQVLQNVSDLTPDDTVNTLTAAMLNFNIAANDSISIADKLNEVDNNYAVTTLDLANSIRKAGSTASTFGVELNDLIGYTTAIASTTRESGNIVGNSLKTIFARIGNNQSSIKALEQIGISVKTAGGEAKSASDLISEVAGKWDTLSDAQKQNTSIGVAGIYQLSRFNAMMNNFSIAQNAAKTAANSTGSAWSEQQKYADSLQARVNKLQNNFTEFAIAASDAFISDGLIEFTQAAGSLLNASTGVIKSVGFLPPLLAAVSTATLLLSKNTRTLASSLILGTRAMGQETLATAGLEAGMTRAAVASRVLKTALRGLLVSTLVGGAFAALGWALESLISSFAEAKKAKDDFEQSQQTNVEAITTNKDSTDKLIQQYKELQKVKESRSLTSDEEQEYLQVTQQLAQTFPALVKGYDSQGNAILKTNKELEKAIENTKEYLALKKQETRDSAKKTFEDASKEIKKSKDELKQYKQIADYNDKGRPKWDLIADDDDYKVAADKAKQSMLKAQSDIESGNAKVKDSVLSIANAYSSIDISNTLKTSISDVVNKLNLKDDLDPEELEKFSSSLGKLQEKMQKALDSGDEKAFDNAKKDLQSLLETYSKSDSSIDVFKMSFDKAQKNIKDGDKSLSSVKSEVGDLGETLAEAGNEAEDFGKKLKEALDANSVDDIKAAIKEMSDAMQFDSVQDVLNGDIFNNTKDQVAPLNDLLEKMAEGKSISANEANTLIQKDKELAQAISIENGVVKINRDEVIKQRKVKLDAYNDMVTYSNKLMKTEVNNAIKTLNADTLRIDSLKKLRKERKLDMSEAELSDLEVKSINNVADAKKELKKLEEKMLQPGGYSNSQIEAMQSVKSALESYISASEEATSTQEMNKQALVEAGTSLENWTDQQEKANEETKTSMYVVDKYKEALEKVNAEIDKYNKQVNDYPKYSQKYRDAIKKEIKALQQKKKLMQEQAKLLKDQIKSGNITQYGIVTSTTSSGGTPSSTGGSYSGKYSSYINSAASKYNVDPALIAAVIQQESGFNAKARSGVGAMGLMQLMPATAKSLGVNNAYDPYQNVMGGTKYLAQQLEKFGGNVEKALAAYNAGPGNVIKYGGIPPFKETQNYVKKIMANYSKSLSSATSSIASYYTNNSAFRVSSKYGQQESGLRSSPHKGTDFAAKAGTAIKSLQSGKVQIAGYSKTAGNWVVIKQDDGTVAKYMHMLNTPSVKAGQSVKAGQTIGKVGSTGNSTGNHLHLQIEQNGKTIDPEKYMQGIGTSISDASQAEAERQQGIAQAKSDLLSLQGDISSVNDQIQELQYELVQSKLDEFDKRIGDFDVRIAKDESMANRYTSDSKEFRKYTSDQKKAVAEQAKIQQQKVNWIQKEIKTNKALNSAQRAQLQEELKQAKLDLISVQDQVRELQKQLVQSKVDETLKSIEKSSSKTQGKIKDVDNKISMTEEDEDKVKYYSKQIKLIQQQQKEAKKYIKQLEEQKKAAKGFPDIQEQITEEMQNWKDKQKDFNLELYNTKKSIKDIYKSLADEVVSIYKEMYEKMRDIELEAHQKATQDLIDEIDKTDDEAKFQKELKERQDSIQKLTDQINQYSLDDSEFGKSKVKELTEQLQKEQLDLDDFLKDRESNKRKEALQDQLEKDEESINNKYDNLVNDERAFKKLEDKIMNGKITDIAKQLNEFSKFINTNMESIGKSISNNLIDKLKEASNALNTAVKGNTTGKKVSSFASGGYTGTGLGAGKLAFLHDKELILNKTDTANILDTVKAVRETAVDDSPKWGQGVKLADLIKKGITSIPSLVPNVNQSMLTNSLIPNLKKIEIPSKTIASSGDKTINLTNTFHIDKLIGGESGARSMFESIKNEVVKLNGSM</sequence>
<comment type="function">
    <text evidence="1 6">Serves as a base for tail tube protein polymerization and acts as a template for tail length determination. Exolysin involved in host peptidoglycan digestion necessary for viral DNA entry into the host cell (PubMed:14763988).</text>
</comment>
<comment type="catalytic activity">
    <reaction evidence="2">
        <text>Exolytic cleavage of the (1-&gt;4)-beta-glycosidic linkage between N-acetylmuramic acid (MurNAc) and N-acetylglucosamine (GlcNAc) residues in peptidoglycan, from either the reducing or the non-reducing ends of the peptidoglycan chains, with concomitant formation of a 1,6-anhydrobond in the MurNAc residue.</text>
        <dbReference type="EC" id="4.2.2.n1"/>
    </reaction>
</comment>
<comment type="subcellular location">
    <subcellularLocation>
        <location evidence="7">Virion</location>
    </subcellularLocation>
</comment>
<comment type="similarity">
    <text evidence="7">Belongs to the P2likevirus tape measure protein family.</text>
</comment>
<accession>O64046</accession>
<gene>
    <name evidence="8" type="primary">yomI</name>
</gene>
<name>TMP_BPSPB</name>
<dbReference type="EC" id="4.2.2.n1" evidence="2"/>
<dbReference type="EMBL" id="AF020713">
    <property type="protein sequence ID" value="AAC13005.1"/>
    <property type="molecule type" value="Genomic_DNA"/>
</dbReference>
<dbReference type="PIR" id="T12796">
    <property type="entry name" value="T12796"/>
</dbReference>
<dbReference type="RefSeq" id="NP_046584.1">
    <property type="nucleotide sequence ID" value="NC_001884.1"/>
</dbReference>
<dbReference type="SMR" id="O64046"/>
<dbReference type="MEROPS" id="M23.A04"/>
<dbReference type="GeneID" id="1261425"/>
<dbReference type="KEGG" id="vg:1261425"/>
<dbReference type="Proteomes" id="UP000009091">
    <property type="component" value="Genome"/>
</dbReference>
<dbReference type="GO" id="GO:0016020">
    <property type="term" value="C:membrane"/>
    <property type="evidence" value="ECO:0007669"/>
    <property type="project" value="InterPro"/>
</dbReference>
<dbReference type="GO" id="GO:0044423">
    <property type="term" value="C:virion component"/>
    <property type="evidence" value="ECO:0007669"/>
    <property type="project" value="UniProtKB-KW"/>
</dbReference>
<dbReference type="GO" id="GO:0008933">
    <property type="term" value="F:peptidoglycan lytic transglycosylase activity"/>
    <property type="evidence" value="ECO:0007669"/>
    <property type="project" value="InterPro"/>
</dbReference>
<dbReference type="GO" id="GO:0042742">
    <property type="term" value="P:defense response to bacterium"/>
    <property type="evidence" value="ECO:0007669"/>
    <property type="project" value="UniProtKB-KW"/>
</dbReference>
<dbReference type="GO" id="GO:0031640">
    <property type="term" value="P:killing of cells of another organism"/>
    <property type="evidence" value="ECO:0007669"/>
    <property type="project" value="UniProtKB-KW"/>
</dbReference>
<dbReference type="GO" id="GO:0000270">
    <property type="term" value="P:peptidoglycan metabolic process"/>
    <property type="evidence" value="ECO:0007669"/>
    <property type="project" value="InterPro"/>
</dbReference>
<dbReference type="GO" id="GO:0044409">
    <property type="term" value="P:symbiont entry into host"/>
    <property type="evidence" value="ECO:0000314"/>
    <property type="project" value="UniProtKB"/>
</dbReference>
<dbReference type="GO" id="GO:0098994">
    <property type="term" value="P:symbiont entry into host cell via disruption of host cell envelope"/>
    <property type="evidence" value="ECO:0007669"/>
    <property type="project" value="UniProtKB-KW"/>
</dbReference>
<dbReference type="GO" id="GO:0098932">
    <property type="term" value="P:symbiont entry into host cell via disruption of host cell wall peptidoglycan"/>
    <property type="evidence" value="ECO:0007669"/>
    <property type="project" value="UniProtKB-KW"/>
</dbReference>
<dbReference type="GO" id="GO:0099001">
    <property type="term" value="P:symbiont genome ejection through host cell envelope, long flexible tail mechanism"/>
    <property type="evidence" value="ECO:0007669"/>
    <property type="project" value="UniProtKB-KW"/>
</dbReference>
<dbReference type="GO" id="GO:0098003">
    <property type="term" value="P:viral tail assembly"/>
    <property type="evidence" value="ECO:0007669"/>
    <property type="project" value="UniProtKB-KW"/>
</dbReference>
<dbReference type="CDD" id="cd00254">
    <property type="entry name" value="LT-like"/>
    <property type="match status" value="1"/>
</dbReference>
<dbReference type="CDD" id="cd12797">
    <property type="entry name" value="M23_peptidase"/>
    <property type="match status" value="1"/>
</dbReference>
<dbReference type="Gene3D" id="1.10.530.10">
    <property type="match status" value="1"/>
</dbReference>
<dbReference type="Gene3D" id="1.20.5.300">
    <property type="match status" value="1"/>
</dbReference>
<dbReference type="Gene3D" id="2.70.70.10">
    <property type="entry name" value="Glucose Permease (Domain IIA)"/>
    <property type="match status" value="1"/>
</dbReference>
<dbReference type="InterPro" id="IPR011055">
    <property type="entry name" value="Dup_hybrid_motif"/>
</dbReference>
<dbReference type="InterPro" id="IPR023346">
    <property type="entry name" value="Lysozyme-like_dom_sf"/>
</dbReference>
<dbReference type="InterPro" id="IPR016047">
    <property type="entry name" value="Peptidase_M23"/>
</dbReference>
<dbReference type="InterPro" id="IPR010090">
    <property type="entry name" value="Phage_tape_meas"/>
</dbReference>
<dbReference type="InterPro" id="IPR000189">
    <property type="entry name" value="Transglyc_AS"/>
</dbReference>
<dbReference type="InterPro" id="IPR008258">
    <property type="entry name" value="Transglycosylase_SLT_dom_1"/>
</dbReference>
<dbReference type="NCBIfam" id="TIGR01760">
    <property type="entry name" value="tape_meas_TP901"/>
    <property type="match status" value="1"/>
</dbReference>
<dbReference type="PANTHER" id="PTHR37423:SF2">
    <property type="entry name" value="MEMBRANE-BOUND LYTIC MUREIN TRANSGLYCOSYLASE C"/>
    <property type="match status" value="1"/>
</dbReference>
<dbReference type="PANTHER" id="PTHR37423">
    <property type="entry name" value="SOLUBLE LYTIC MUREIN TRANSGLYCOSYLASE-RELATED"/>
    <property type="match status" value="1"/>
</dbReference>
<dbReference type="Pfam" id="PF01551">
    <property type="entry name" value="Peptidase_M23"/>
    <property type="match status" value="1"/>
</dbReference>
<dbReference type="Pfam" id="PF10145">
    <property type="entry name" value="PhageMin_Tail"/>
    <property type="match status" value="1"/>
</dbReference>
<dbReference type="Pfam" id="PF01464">
    <property type="entry name" value="SLT"/>
    <property type="match status" value="1"/>
</dbReference>
<dbReference type="SUPFAM" id="SSF51261">
    <property type="entry name" value="Duplicated hybrid motif"/>
    <property type="match status" value="1"/>
</dbReference>
<dbReference type="SUPFAM" id="SSF53955">
    <property type="entry name" value="Lysozyme-like"/>
    <property type="match status" value="1"/>
</dbReference>
<dbReference type="PROSITE" id="PS00922">
    <property type="entry name" value="TRANSGLYCOSYLASE"/>
    <property type="match status" value="1"/>
</dbReference>
<reference evidence="9" key="1">
    <citation type="journal article" date="1998" name="Proc. Natl. Acad. Sci. U.S.A.">
        <title>Introns and intein coding sequence in the ribonucleotide reductase genes of Bacillus subtilis temperate bacteriophage SPbeta.</title>
        <authorList>
            <person name="Lazarevic V."/>
            <person name="Soldo B."/>
            <person name="Duesterhoeft A."/>
            <person name="Hilbert H."/>
            <person name="Maueel C."/>
            <person name="Karamata D."/>
        </authorList>
    </citation>
    <scope>NUCLEOTIDE SEQUENCE [GENOMIC DNA]</scope>
</reference>
<reference key="2">
    <citation type="journal article" date="2004" name="Mol. Microbiol.">
        <title>Peptidoglycan hydrolytic activities associated with bacteriophage virions.</title>
        <authorList>
            <person name="Moak M."/>
            <person name="Molineux I.J."/>
        </authorList>
    </citation>
    <scope>FUNCTION</scope>
</reference>